<sequence>MKLISWNIDSLNAALTSDSARAKLSQEVLQTLVAENADIIAIQETKLSAKGPTKKHVEILEELFPGYENTWRSSQEPARKGYAGTMFLYKKELTPTISFPEIGAPSTMDLEGRIITLEFDAFFVTQVYTPNAGDGLKRLEERQVWDAKYAEYLAELDKEKPVLATGDYNVAHNEIDLANPASNRRSPGFTDEERAGFTNLLATGFTDTFRHVHGDVPERYTWWAQRSKTSKINNTGWRIDYWLTSNRIADKVTKSDMIDSGARQDHTPIVLEIDL</sequence>
<keyword id="KW-0963">Cytoplasm</keyword>
<keyword id="KW-0269">Exonuclease</keyword>
<keyword id="KW-0378">Hydrolase</keyword>
<keyword id="KW-0460">Magnesium</keyword>
<keyword id="KW-0479">Metal-binding</keyword>
<keyword id="KW-0540">Nuclease</keyword>
<keyword id="KW-1185">Reference proteome</keyword>
<evidence type="ECO:0000250" key="1"/>
<evidence type="ECO:0000305" key="2"/>
<proteinExistence type="inferred from homology"/>
<comment type="function">
    <text>In addition to 3'- to 5'-exonuclease and 3'-phosphatase activities, ExoA was shown to make single-strand breaks at apurinic sites in DNA.</text>
</comment>
<comment type="catalytic activity">
    <reaction>
        <text>Exonucleolytic cleavage in the 3'- to 5'-direction to yield nucleoside 5'-phosphates.</text>
        <dbReference type="EC" id="3.1.11.2"/>
    </reaction>
</comment>
<comment type="cofactor">
    <cofactor evidence="1">
        <name>Mg(2+)</name>
        <dbReference type="ChEBI" id="CHEBI:18420"/>
    </cofactor>
    <cofactor evidence="1">
        <name>Mn(2+)</name>
        <dbReference type="ChEBI" id="CHEBI:29035"/>
    </cofactor>
    <text evidence="1">Probably binds two magnesium or manganese ions per subunit.</text>
</comment>
<comment type="subcellular location">
    <subcellularLocation>
        <location>Cytoplasm</location>
    </subcellularLocation>
</comment>
<comment type="similarity">
    <text evidence="2">Belongs to the DNA repair enzymes AP/ExoA family.</text>
</comment>
<feature type="chain" id="PRO_0000200027" description="Exodeoxyribonuclease">
    <location>
        <begin position="1"/>
        <end position="275"/>
    </location>
</feature>
<feature type="active site" evidence="1">
    <location>
        <position position="128"/>
    </location>
</feature>
<feature type="active site" description="Proton donor/acceptor" evidence="1">
    <location>
        <position position="167"/>
    </location>
</feature>
<feature type="binding site" evidence="1">
    <location>
        <position position="9"/>
    </location>
    <ligand>
        <name>Mg(2+)</name>
        <dbReference type="ChEBI" id="CHEBI:18420"/>
        <label>1</label>
    </ligand>
</feature>
<feature type="binding site" evidence="1">
    <location>
        <position position="44"/>
    </location>
    <ligand>
        <name>Mg(2+)</name>
        <dbReference type="ChEBI" id="CHEBI:18420"/>
        <label>1</label>
    </ligand>
</feature>
<feature type="binding site" evidence="1">
    <location>
        <position position="167"/>
    </location>
    <ligand>
        <name>Mg(2+)</name>
        <dbReference type="ChEBI" id="CHEBI:18420"/>
        <label>2</label>
    </ligand>
</feature>
<feature type="binding site" evidence="1">
    <location>
        <position position="169"/>
    </location>
    <ligand>
        <name>Mg(2+)</name>
        <dbReference type="ChEBI" id="CHEBI:18420"/>
        <label>2</label>
    </ligand>
</feature>
<feature type="binding site" evidence="1">
    <location>
        <position position="265"/>
    </location>
    <ligand>
        <name>Mg(2+)</name>
        <dbReference type="ChEBI" id="CHEBI:18420"/>
        <label>1</label>
    </ligand>
</feature>
<feature type="site" description="Transition state stabilizer" evidence="1">
    <location>
        <position position="169"/>
    </location>
</feature>
<feature type="site" description="Important for catalytic activity" evidence="1">
    <location>
        <position position="240"/>
    </location>
</feature>
<feature type="site" description="Interaction with DNA substrate" evidence="1">
    <location>
        <position position="266"/>
    </location>
</feature>
<dbReference type="EC" id="3.1.11.2"/>
<dbReference type="EMBL" id="J04234">
    <property type="protein sequence ID" value="AAA26879.1"/>
    <property type="molecule type" value="Genomic_DNA"/>
</dbReference>
<dbReference type="EMBL" id="AE007317">
    <property type="protein sequence ID" value="AAL00463.1"/>
    <property type="molecule type" value="Genomic_DNA"/>
</dbReference>
<dbReference type="PIR" id="A32301">
    <property type="entry name" value="A32301"/>
</dbReference>
<dbReference type="PIR" id="B98079">
    <property type="entry name" value="B98079"/>
</dbReference>
<dbReference type="RefSeq" id="NP_359252.1">
    <property type="nucleotide sequence ID" value="NC_003098.1"/>
</dbReference>
<dbReference type="RefSeq" id="WP_000767464.1">
    <property type="nucleotide sequence ID" value="NC_003098.1"/>
</dbReference>
<dbReference type="SMR" id="P0A2X4"/>
<dbReference type="STRING" id="171101.spr1660"/>
<dbReference type="KEGG" id="spr:spr1660"/>
<dbReference type="PATRIC" id="fig|171101.6.peg.1792"/>
<dbReference type="eggNOG" id="COG0708">
    <property type="taxonomic scope" value="Bacteria"/>
</dbReference>
<dbReference type="HOGENOM" id="CLU_027539_1_3_9"/>
<dbReference type="Proteomes" id="UP000000586">
    <property type="component" value="Chromosome"/>
</dbReference>
<dbReference type="GO" id="GO:0005737">
    <property type="term" value="C:cytoplasm"/>
    <property type="evidence" value="ECO:0007669"/>
    <property type="project" value="UniProtKB-SubCell"/>
</dbReference>
<dbReference type="GO" id="GO:0003677">
    <property type="term" value="F:DNA binding"/>
    <property type="evidence" value="ECO:0007669"/>
    <property type="project" value="InterPro"/>
</dbReference>
<dbReference type="GO" id="GO:0003906">
    <property type="term" value="F:DNA-(apurinic or apyrimidinic site) endonuclease activity"/>
    <property type="evidence" value="ECO:0000318"/>
    <property type="project" value="GO_Central"/>
</dbReference>
<dbReference type="GO" id="GO:0008311">
    <property type="term" value="F:double-stranded DNA 3'-5' DNA exonuclease activity"/>
    <property type="evidence" value="ECO:0000318"/>
    <property type="project" value="GO_Central"/>
</dbReference>
<dbReference type="GO" id="GO:0004519">
    <property type="term" value="F:endonuclease activity"/>
    <property type="evidence" value="ECO:0007669"/>
    <property type="project" value="InterPro"/>
</dbReference>
<dbReference type="GO" id="GO:0046872">
    <property type="term" value="F:metal ion binding"/>
    <property type="evidence" value="ECO:0007669"/>
    <property type="project" value="UniProtKB-KW"/>
</dbReference>
<dbReference type="GO" id="GO:0008081">
    <property type="term" value="F:phosphoric diester hydrolase activity"/>
    <property type="evidence" value="ECO:0000318"/>
    <property type="project" value="GO_Central"/>
</dbReference>
<dbReference type="GO" id="GO:0006284">
    <property type="term" value="P:base-excision repair"/>
    <property type="evidence" value="ECO:0000318"/>
    <property type="project" value="GO_Central"/>
</dbReference>
<dbReference type="CDD" id="cd09087">
    <property type="entry name" value="Ape1-like_AP-endo"/>
    <property type="match status" value="1"/>
</dbReference>
<dbReference type="FunFam" id="3.60.10.10:FF:000054">
    <property type="entry name" value="Exodeoxyribonuclease III"/>
    <property type="match status" value="1"/>
</dbReference>
<dbReference type="Gene3D" id="3.60.10.10">
    <property type="entry name" value="Endonuclease/exonuclease/phosphatase"/>
    <property type="match status" value="1"/>
</dbReference>
<dbReference type="InterPro" id="IPR004808">
    <property type="entry name" value="AP_endonuc_1"/>
</dbReference>
<dbReference type="InterPro" id="IPR020847">
    <property type="entry name" value="AP_endonuclease_F1_BS"/>
</dbReference>
<dbReference type="InterPro" id="IPR020848">
    <property type="entry name" value="AP_endonuclease_F1_CS"/>
</dbReference>
<dbReference type="InterPro" id="IPR036691">
    <property type="entry name" value="Endo/exonu/phosph_ase_sf"/>
</dbReference>
<dbReference type="InterPro" id="IPR005135">
    <property type="entry name" value="Endo/exonuclease/phosphatase"/>
</dbReference>
<dbReference type="NCBIfam" id="TIGR00195">
    <property type="entry name" value="exoDNase_III"/>
    <property type="match status" value="1"/>
</dbReference>
<dbReference type="NCBIfam" id="TIGR00633">
    <property type="entry name" value="xth"/>
    <property type="match status" value="1"/>
</dbReference>
<dbReference type="PANTHER" id="PTHR22748">
    <property type="entry name" value="AP ENDONUCLEASE"/>
    <property type="match status" value="1"/>
</dbReference>
<dbReference type="PANTHER" id="PTHR22748:SF6">
    <property type="entry name" value="DNA-(APURINIC OR APYRIMIDINIC SITE) ENDONUCLEASE"/>
    <property type="match status" value="1"/>
</dbReference>
<dbReference type="Pfam" id="PF03372">
    <property type="entry name" value="Exo_endo_phos"/>
    <property type="match status" value="1"/>
</dbReference>
<dbReference type="SUPFAM" id="SSF56219">
    <property type="entry name" value="DNase I-like"/>
    <property type="match status" value="1"/>
</dbReference>
<dbReference type="PROSITE" id="PS00726">
    <property type="entry name" value="AP_NUCLEASE_F1_1"/>
    <property type="match status" value="1"/>
</dbReference>
<dbReference type="PROSITE" id="PS00727">
    <property type="entry name" value="AP_NUCLEASE_F1_2"/>
    <property type="match status" value="1"/>
</dbReference>
<dbReference type="PROSITE" id="PS00728">
    <property type="entry name" value="AP_NUCLEASE_F1_3"/>
    <property type="match status" value="1"/>
</dbReference>
<dbReference type="PROSITE" id="PS51435">
    <property type="entry name" value="AP_NUCLEASE_F1_4"/>
    <property type="match status" value="1"/>
</dbReference>
<accession>P0A2X4</accession>
<accession>P21998</accession>
<gene>
    <name type="primary">exoA</name>
    <name type="ordered locus">spr1660</name>
</gene>
<name>EXOA_STRR6</name>
<reference key="1">
    <citation type="journal article" date="1989" name="J. Bacteriol.">
        <title>The exoA gene of Streptococcus pneumoniae and its product, a DNA exonuclease with apurinic endonuclease activity.</title>
        <authorList>
            <person name="Puyet A."/>
            <person name="Greenberg B."/>
            <person name="Lacks S.A."/>
        </authorList>
    </citation>
    <scope>NUCLEOTIDE SEQUENCE [GENOMIC DNA]</scope>
</reference>
<reference key="2">
    <citation type="journal article" date="2001" name="J. Bacteriol.">
        <title>Genome of the bacterium Streptococcus pneumoniae strain R6.</title>
        <authorList>
            <person name="Hoskins J."/>
            <person name="Alborn W.E. Jr."/>
            <person name="Arnold J."/>
            <person name="Blaszczak L.C."/>
            <person name="Burgett S."/>
            <person name="DeHoff B.S."/>
            <person name="Estrem S.T."/>
            <person name="Fritz L."/>
            <person name="Fu D.-J."/>
            <person name="Fuller W."/>
            <person name="Geringer C."/>
            <person name="Gilmour R."/>
            <person name="Glass J.S."/>
            <person name="Khoja H."/>
            <person name="Kraft A.R."/>
            <person name="Lagace R.E."/>
            <person name="LeBlanc D.J."/>
            <person name="Lee L.N."/>
            <person name="Lefkowitz E.J."/>
            <person name="Lu J."/>
            <person name="Matsushima P."/>
            <person name="McAhren S.M."/>
            <person name="McHenney M."/>
            <person name="McLeaster K."/>
            <person name="Mundy C.W."/>
            <person name="Nicas T.I."/>
            <person name="Norris F.H."/>
            <person name="O'Gara M."/>
            <person name="Peery R.B."/>
            <person name="Robertson G.T."/>
            <person name="Rockey P."/>
            <person name="Sun P.-M."/>
            <person name="Winkler M.E."/>
            <person name="Yang Y."/>
            <person name="Young-Bellido M."/>
            <person name="Zhao G."/>
            <person name="Zook C.A."/>
            <person name="Baltz R.H."/>
            <person name="Jaskunas S.R."/>
            <person name="Rosteck P.R. Jr."/>
            <person name="Skatrud P.L."/>
            <person name="Glass J.I."/>
        </authorList>
    </citation>
    <scope>NUCLEOTIDE SEQUENCE [LARGE SCALE GENOMIC DNA]</scope>
    <source>
        <strain>ATCC BAA-255 / R6</strain>
    </source>
</reference>
<organism>
    <name type="scientific">Streptococcus pneumoniae (strain ATCC BAA-255 / R6)</name>
    <dbReference type="NCBI Taxonomy" id="171101"/>
    <lineage>
        <taxon>Bacteria</taxon>
        <taxon>Bacillati</taxon>
        <taxon>Bacillota</taxon>
        <taxon>Bacilli</taxon>
        <taxon>Lactobacillales</taxon>
        <taxon>Streptococcaceae</taxon>
        <taxon>Streptococcus</taxon>
    </lineage>
</organism>
<protein>
    <recommendedName>
        <fullName>Exodeoxyribonuclease</fullName>
        <ecNumber>3.1.11.2</ecNumber>
    </recommendedName>
</protein>